<accession>Q5XA12</accession>
<accession>P82486</accession>
<comment type="function">
    <text evidence="1">Catalyzes the aldol condensation of dihydroxyacetone phosphate (DHAP or glycerone-phosphate) with glyceraldehyde 3-phosphate (G3P) to form fructose 1,6-bisphosphate (FBP) in gluconeogenesis and the reverse reaction in glycolysis.</text>
</comment>
<comment type="catalytic activity">
    <reaction>
        <text>beta-D-fructose 1,6-bisphosphate = D-glyceraldehyde 3-phosphate + dihydroxyacetone phosphate</text>
        <dbReference type="Rhea" id="RHEA:14729"/>
        <dbReference type="ChEBI" id="CHEBI:32966"/>
        <dbReference type="ChEBI" id="CHEBI:57642"/>
        <dbReference type="ChEBI" id="CHEBI:59776"/>
        <dbReference type="EC" id="4.1.2.13"/>
    </reaction>
</comment>
<comment type="cofactor">
    <cofactor evidence="1">
        <name>Zn(2+)</name>
        <dbReference type="ChEBI" id="CHEBI:29105"/>
    </cofactor>
    <text evidence="1">Binds 2 Zn(2+) ions per subunit. One is catalytic and the other provides a structural contribution.</text>
</comment>
<comment type="pathway">
    <text>Carbohydrate degradation; glycolysis; D-glyceraldehyde 3-phosphate and glycerone phosphate from D-glucose: step 4/4.</text>
</comment>
<comment type="similarity">
    <text evidence="3">Belongs to the class II fructose-bisphosphate aldolase family.</text>
</comment>
<reference key="1">
    <citation type="journal article" date="2004" name="J. Infect. Dis.">
        <title>Progress toward characterization of the group A Streptococcus metagenome: complete genome sequence of a macrolide-resistant serotype M6 strain.</title>
        <authorList>
            <person name="Banks D.J."/>
            <person name="Porcella S.F."/>
            <person name="Barbian K.D."/>
            <person name="Beres S.B."/>
            <person name="Philips L.E."/>
            <person name="Voyich J.M."/>
            <person name="DeLeo F.R."/>
            <person name="Martin J.M."/>
            <person name="Somerville G.A."/>
            <person name="Musser J.M."/>
        </authorList>
    </citation>
    <scope>NUCLEOTIDE SEQUENCE [LARGE SCALE GENOMIC DNA]</scope>
    <source>
        <strain>ATCC BAA-946 / MGAS10394</strain>
    </source>
</reference>
<reference key="2">
    <citation type="submission" date="2000-05" db="UniProtKB">
        <title>Two-dimensional gel electrophoresis map of Streptococcus pyogenes proteins.</title>
        <authorList>
            <person name="Hogan D.A."/>
            <person name="Du P."/>
            <person name="Stevenson T.I."/>
            <person name="Whitton M."/>
            <person name="Kilby G.W."/>
            <person name="Rogers J."/>
            <person name="VanBogelen R.A."/>
        </authorList>
    </citation>
    <scope>PROTEIN SEQUENCE OF 2-12; 15-36; 130-150; 196-219; 224-244 AND 284-293</scope>
    <scope>IDENTIFICATION BY MASS SPECTROMETRY</scope>
    <source>
        <strain>JRS4 / Serotype M6</strain>
    </source>
</reference>
<evidence type="ECO:0000250" key="1"/>
<evidence type="ECO:0000269" key="2">
    <source ref="2"/>
</evidence>
<evidence type="ECO:0000305" key="3"/>
<dbReference type="EC" id="4.1.2.13"/>
<dbReference type="EMBL" id="CP000003">
    <property type="protein sequence ID" value="AAT87751.1"/>
    <property type="molecule type" value="Genomic_DNA"/>
</dbReference>
<dbReference type="RefSeq" id="WP_011184946.1">
    <property type="nucleotide sequence ID" value="NC_006086.1"/>
</dbReference>
<dbReference type="SMR" id="Q5XA12"/>
<dbReference type="KEGG" id="spa:M6_Spy1616"/>
<dbReference type="HOGENOM" id="CLU_040088_0_1_9"/>
<dbReference type="UniPathway" id="UPA00109">
    <property type="reaction ID" value="UER00183"/>
</dbReference>
<dbReference type="Proteomes" id="UP000001167">
    <property type="component" value="Chromosome"/>
</dbReference>
<dbReference type="GO" id="GO:0004332">
    <property type="term" value="F:fructose-bisphosphate aldolase activity"/>
    <property type="evidence" value="ECO:0007669"/>
    <property type="project" value="UniProtKB-EC"/>
</dbReference>
<dbReference type="GO" id="GO:0008270">
    <property type="term" value="F:zinc ion binding"/>
    <property type="evidence" value="ECO:0007669"/>
    <property type="project" value="InterPro"/>
</dbReference>
<dbReference type="GO" id="GO:0030388">
    <property type="term" value="P:fructose 1,6-bisphosphate metabolic process"/>
    <property type="evidence" value="ECO:0007669"/>
    <property type="project" value="InterPro"/>
</dbReference>
<dbReference type="GO" id="GO:0006096">
    <property type="term" value="P:glycolytic process"/>
    <property type="evidence" value="ECO:0007669"/>
    <property type="project" value="UniProtKB-UniPathway"/>
</dbReference>
<dbReference type="CDD" id="cd00947">
    <property type="entry name" value="TBP_aldolase_IIB"/>
    <property type="match status" value="1"/>
</dbReference>
<dbReference type="FunFam" id="3.20.20.70:FF:000111">
    <property type="entry name" value="Fructose-1,6-bisphosphate aldolase"/>
    <property type="match status" value="1"/>
</dbReference>
<dbReference type="Gene3D" id="3.20.20.70">
    <property type="entry name" value="Aldolase class I"/>
    <property type="match status" value="1"/>
</dbReference>
<dbReference type="InterPro" id="IPR013785">
    <property type="entry name" value="Aldolase_TIM"/>
</dbReference>
<dbReference type="InterPro" id="IPR050246">
    <property type="entry name" value="Class_II_FBP_aldolase"/>
</dbReference>
<dbReference type="InterPro" id="IPR000771">
    <property type="entry name" value="FBA_II"/>
</dbReference>
<dbReference type="InterPro" id="IPR011289">
    <property type="entry name" value="Fruc_bis_ald_class-2"/>
</dbReference>
<dbReference type="NCBIfam" id="TIGR00167">
    <property type="entry name" value="cbbA"/>
    <property type="match status" value="1"/>
</dbReference>
<dbReference type="NCBIfam" id="TIGR01859">
    <property type="entry name" value="fruc_bis_ald"/>
    <property type="match status" value="1"/>
</dbReference>
<dbReference type="NCBIfam" id="NF005590">
    <property type="entry name" value="PRK07315.1"/>
    <property type="match status" value="1"/>
</dbReference>
<dbReference type="PANTHER" id="PTHR30304">
    <property type="entry name" value="D-TAGATOSE-1,6-BISPHOSPHATE ALDOLASE"/>
    <property type="match status" value="1"/>
</dbReference>
<dbReference type="PANTHER" id="PTHR30304:SF0">
    <property type="entry name" value="D-TAGATOSE-1,6-BISPHOSPHATE ALDOLASE SUBUNIT GATY-RELATED"/>
    <property type="match status" value="1"/>
</dbReference>
<dbReference type="Pfam" id="PF01116">
    <property type="entry name" value="F_bP_aldolase"/>
    <property type="match status" value="1"/>
</dbReference>
<dbReference type="PIRSF" id="PIRSF001359">
    <property type="entry name" value="F_bP_aldolase_II"/>
    <property type="match status" value="1"/>
</dbReference>
<dbReference type="SUPFAM" id="SSF51569">
    <property type="entry name" value="Aldolase"/>
    <property type="match status" value="1"/>
</dbReference>
<dbReference type="PROSITE" id="PS00602">
    <property type="entry name" value="ALDOLASE_CLASS_II_1"/>
    <property type="match status" value="1"/>
</dbReference>
<dbReference type="PROSITE" id="PS00806">
    <property type="entry name" value="ALDOLASE_CLASS_II_2"/>
    <property type="match status" value="1"/>
</dbReference>
<organism>
    <name type="scientific">Streptococcus pyogenes serotype M6 (strain ATCC BAA-946 / MGAS10394)</name>
    <dbReference type="NCBI Taxonomy" id="286636"/>
    <lineage>
        <taxon>Bacteria</taxon>
        <taxon>Bacillati</taxon>
        <taxon>Bacillota</taxon>
        <taxon>Bacilli</taxon>
        <taxon>Lactobacillales</taxon>
        <taxon>Streptococcaceae</taxon>
        <taxon>Streptococcus</taxon>
    </lineage>
</organism>
<gene>
    <name type="primary">fba</name>
    <name type="ordered locus">M6_Spy1616</name>
</gene>
<name>ALF_STRP6</name>
<feature type="initiator methionine" description="Removed" evidence="2">
    <location>
        <position position="1"/>
    </location>
</feature>
<feature type="chain" id="PRO_0000178749" description="Fructose-bisphosphate aldolase">
    <location>
        <begin position="2"/>
        <end position="293"/>
    </location>
</feature>
<feature type="active site" description="Proton donor" evidence="1">
    <location>
        <position position="85"/>
    </location>
</feature>
<feature type="binding site" evidence="1">
    <location>
        <position position="50"/>
    </location>
    <ligand>
        <name>D-glyceraldehyde 3-phosphate</name>
        <dbReference type="ChEBI" id="CHEBI:59776"/>
    </ligand>
</feature>
<feature type="binding site" evidence="1">
    <location>
        <position position="86"/>
    </location>
    <ligand>
        <name>Zn(2+)</name>
        <dbReference type="ChEBI" id="CHEBI:29105"/>
        <label>1</label>
        <note>catalytic</note>
    </ligand>
</feature>
<feature type="binding site" evidence="1">
    <location>
        <position position="106"/>
    </location>
    <ligand>
        <name>Zn(2+)</name>
        <dbReference type="ChEBI" id="CHEBI:29105"/>
        <label>2</label>
    </ligand>
</feature>
<feature type="binding site" evidence="1">
    <location>
        <position position="136"/>
    </location>
    <ligand>
        <name>Zn(2+)</name>
        <dbReference type="ChEBI" id="CHEBI:29105"/>
        <label>2</label>
    </ligand>
</feature>
<feature type="binding site" evidence="1">
    <location>
        <position position="178"/>
    </location>
    <ligand>
        <name>Zn(2+)</name>
        <dbReference type="ChEBI" id="CHEBI:29105"/>
        <label>1</label>
        <note>catalytic</note>
    </ligand>
</feature>
<feature type="binding site" evidence="1">
    <location>
        <position position="179"/>
    </location>
    <ligand>
        <name>dihydroxyacetone phosphate</name>
        <dbReference type="ChEBI" id="CHEBI:57642"/>
    </ligand>
</feature>
<feature type="binding site" evidence="1">
    <location>
        <position position="208"/>
    </location>
    <ligand>
        <name>Zn(2+)</name>
        <dbReference type="ChEBI" id="CHEBI:29105"/>
        <label>1</label>
        <note>catalytic</note>
    </ligand>
</feature>
<feature type="binding site" evidence="1">
    <location>
        <begin position="209"/>
        <end position="211"/>
    </location>
    <ligand>
        <name>dihydroxyacetone phosphate</name>
        <dbReference type="ChEBI" id="CHEBI:57642"/>
    </ligand>
</feature>
<feature type="binding site" evidence="1">
    <location>
        <begin position="230"/>
        <end position="233"/>
    </location>
    <ligand>
        <name>dihydroxyacetone phosphate</name>
        <dbReference type="ChEBI" id="CHEBI:57642"/>
    </ligand>
</feature>
<sequence>MAIVSAEKFVQAARENGYAVGGFNTNNLEWTQAILRAAEAKQAPVLIQTSMGAAKYMGGYKVCQSLITNLVESMGITVPVAIHLDHGHYGDALECIEVGYTSIMFDGSHLPVEENLAKTAEVVKIAHAKGVSVEAEVGTIGGEEDGIIGKGELAPIEDAKAMVETGIDFLAAGIGNIHGPYPENWEGLALDHLEKLTAAVPGFPIVLHGGSGIPDDQIKEAIRLGVAKVNVNTESQIAFSNATREFARNYEANEAEYDGKKLFDPRKFLAPGMKAVQGAVEERIDVFGSANKA</sequence>
<proteinExistence type="evidence at protein level"/>
<keyword id="KW-0903">Direct protein sequencing</keyword>
<keyword id="KW-0324">Glycolysis</keyword>
<keyword id="KW-0456">Lyase</keyword>
<keyword id="KW-0479">Metal-binding</keyword>
<keyword id="KW-0862">Zinc</keyword>
<protein>
    <recommendedName>
        <fullName>Fructose-bisphosphate aldolase</fullName>
        <shortName>FBP aldolase</shortName>
        <shortName>FBPA</shortName>
        <ecNumber>4.1.2.13</ecNumber>
    </recommendedName>
    <alternativeName>
        <fullName>Fructose-1,6-bisphosphate aldolase</fullName>
    </alternativeName>
</protein>